<feature type="chain" id="PRO_0000460915" description="Epoxide hydrolase 1">
    <location>
        <begin position="1"/>
        <end position="313"/>
    </location>
</feature>
<feature type="domain" description="AB hydrolase-1" evidence="3">
    <location>
        <begin position="25"/>
        <end position="299"/>
    </location>
</feature>
<feature type="active site" description="Nucleophile" evidence="1">
    <location>
        <position position="100"/>
    </location>
</feature>
<feature type="active site" description="Proton donor" evidence="1">
    <location>
        <position position="227"/>
    </location>
</feature>
<feature type="active site" description="Proton acceptor" evidence="1">
    <location>
        <position position="292"/>
    </location>
</feature>
<feature type="binding site" evidence="1">
    <location>
        <position position="149"/>
    </location>
    <ligand>
        <name>an epoxide</name>
        <dbReference type="ChEBI" id="CHEBI:32955"/>
    </ligand>
</feature>
<feature type="site" description="Contributes to the formation of an oxyanion binding site for the epoxide oxygen of substrate" evidence="2">
    <location>
        <position position="149"/>
    </location>
</feature>
<feature type="site" description="Contributes to the formation of an oxyanion binding site for the epoxide oxygen of substrate" evidence="2">
    <location>
        <position position="227"/>
    </location>
</feature>
<proteinExistence type="evidence at protein level"/>
<name>EPH1_SIRGR</name>
<gene>
    <name evidence="5" type="primary">EPH1</name>
</gene>
<sequence length="313" mass="35019">MEKIEHSTIATNGINMHVASAGSGPAVLFLHGFPELWYSWRHQLLYLSSLGYRAIAPDLRGFGDTDAPPSPSSYTAHHIVGDLVGLLDQLGVDQVFLVGDWGAMMAWYFCLFRPDRVKALVNLSVHFTPRNPAISPLDGFRLMLGDDFYVCKFQEPGVAEADFGSVDTATMFKKFLTMRDPRPPIIPNGFRSLATPEALPSWLTEEDIDYFAAKFAKTGFTGGFNYYRAIDLTWELTAPWSGSEIKVPTKFIVGDLDLVYHFPGVKEYIHGGGFKKDVPFLEEVVVMEGAAHFINQEKADEINSLIYDFIKQF</sequence>
<reference key="1">
    <citation type="journal article" date="2016" name="Proc. Natl. Acad. Sci. U.S.A.">
        <title>The biosynthetic pathway of the nonsugar, high-intensity sweetener mogroside V from Siraitia grosvenorii.</title>
        <authorList>
            <person name="Itkin M."/>
            <person name="Davidovich-Rikanati R."/>
            <person name="Cohen S."/>
            <person name="Portnoy V."/>
            <person name="Doron-Faigenboim A."/>
            <person name="Oren E."/>
            <person name="Freilich S."/>
            <person name="Tzuri G."/>
            <person name="Baranes N."/>
            <person name="Shen S."/>
            <person name="Petreikov M."/>
            <person name="Sertchook R."/>
            <person name="Ben-Dor S."/>
            <person name="Gottlieb H."/>
            <person name="Hernandez A."/>
            <person name="Nelson D.R."/>
            <person name="Paris H.S."/>
            <person name="Tadmor Y."/>
            <person name="Burger Y."/>
            <person name="Lewinsohn E."/>
            <person name="Katzir N."/>
            <person name="Schaffer A."/>
        </authorList>
    </citation>
    <scope>NUCLEOTIDE SEQUENCE</scope>
    <scope>FUNCTION</scope>
    <scope>CATALYTIC ACTIVITY</scope>
    <scope>PATHWAY</scope>
    <scope>TISSUE SPECIFICITY</scope>
    <scope>GENE FAMILY</scope>
    <scope>NOMENCLATURE</scope>
</reference>
<accession>P0DO68</accession>
<keyword id="KW-0378">Hydrolase</keyword>
<protein>
    <recommendedName>
        <fullName evidence="5">Epoxide hydrolase 1</fullName>
        <shortName evidence="5">SgEPH1</shortName>
        <ecNumber evidence="4">3.3.2.10</ecNumber>
    </recommendedName>
    <alternativeName>
        <fullName evidence="6">24,25-dihydroxycucurbitadienol synthase EPH1</fullName>
        <ecNumber evidence="4">3.3.2.-</ecNumber>
    </alternativeName>
</protein>
<dbReference type="EC" id="3.3.2.10" evidence="4"/>
<dbReference type="EC" id="3.3.2.-" evidence="4"/>
<dbReference type="SMR" id="P0DO68"/>
<dbReference type="UniPathway" id="UPA00213"/>
<dbReference type="GO" id="GO:0016787">
    <property type="term" value="F:hydrolase activity"/>
    <property type="evidence" value="ECO:0007669"/>
    <property type="project" value="UniProtKB-KW"/>
</dbReference>
<dbReference type="FunFam" id="3.40.50.1820:FF:000161">
    <property type="entry name" value="Epoxide hydrolase"/>
    <property type="match status" value="1"/>
</dbReference>
<dbReference type="Gene3D" id="3.40.50.1820">
    <property type="entry name" value="alpha/beta hydrolase"/>
    <property type="match status" value="1"/>
</dbReference>
<dbReference type="InterPro" id="IPR000073">
    <property type="entry name" value="AB_hydrolase_1"/>
</dbReference>
<dbReference type="InterPro" id="IPR029058">
    <property type="entry name" value="AB_hydrolase_fold"/>
</dbReference>
<dbReference type="InterPro" id="IPR000639">
    <property type="entry name" value="Epox_hydrolase-like"/>
</dbReference>
<dbReference type="PANTHER" id="PTHR43329">
    <property type="entry name" value="EPOXIDE HYDROLASE"/>
    <property type="match status" value="1"/>
</dbReference>
<dbReference type="Pfam" id="PF00561">
    <property type="entry name" value="Abhydrolase_1"/>
    <property type="match status" value="1"/>
</dbReference>
<dbReference type="PRINTS" id="PR00412">
    <property type="entry name" value="EPOXHYDRLASE"/>
</dbReference>
<dbReference type="SUPFAM" id="SSF53474">
    <property type="entry name" value="alpha/beta-Hydrolases"/>
    <property type="match status" value="1"/>
</dbReference>
<organism>
    <name type="scientific">Siraitia grosvenorii</name>
    <name type="common">Monk's fruit</name>
    <name type="synonym">Luo han guo</name>
    <dbReference type="NCBI Taxonomy" id="190515"/>
    <lineage>
        <taxon>Eukaryota</taxon>
        <taxon>Viridiplantae</taxon>
        <taxon>Streptophyta</taxon>
        <taxon>Embryophyta</taxon>
        <taxon>Tracheophyta</taxon>
        <taxon>Spermatophyta</taxon>
        <taxon>Magnoliopsida</taxon>
        <taxon>eudicotyledons</taxon>
        <taxon>Gunneridae</taxon>
        <taxon>Pentapetalae</taxon>
        <taxon>rosids</taxon>
        <taxon>fabids</taxon>
        <taxon>Cucurbitales</taxon>
        <taxon>Cucurbitaceae</taxon>
        <taxon>Siraitieae</taxon>
        <taxon>Siraitia</taxon>
    </lineage>
</organism>
<comment type="function">
    <text evidence="4">Epoxide hydrolase involved in the biosynthesis of cucurbitacin and mogroside tetracyclic triterpene natural products (e.g. siamenoside I and mogrosides IV, V and VI) (PubMed:27821754). Cucurbitacins have cytotoxic properties and exhibit deterrent taste as a defense barrier against herbivores (PubMed:27821754). Mogrosides are nonsugar highly oxygenated compounds used as high-intensity zero-calorie sweeteners; they also possess pharmacological properties such as regulating immunity, lowering blood sugar and lipid levels, protecting the liver, and acting as antioxidants and antitumor agents (PubMed:27821754). Catalyzes the hydrolysis of aromatic epoxide-containing substrates, such as the conversion of 24,25-epoxycucurbitadienol to 24,25-dihydroxycucurbitadienol (PubMed:27821754).</text>
</comment>
<comment type="catalytic activity">
    <reaction evidence="4">
        <text>an epoxide + H2O = an ethanediol</text>
        <dbReference type="Rhea" id="RHEA:19037"/>
        <dbReference type="ChEBI" id="CHEBI:15377"/>
        <dbReference type="ChEBI" id="CHEBI:32955"/>
        <dbReference type="ChEBI" id="CHEBI:140594"/>
        <dbReference type="EC" id="3.3.2.10"/>
    </reaction>
    <physiologicalReaction direction="left-to-right" evidence="4">
        <dbReference type="Rhea" id="RHEA:19038"/>
    </physiologicalReaction>
</comment>
<comment type="catalytic activity">
    <reaction evidence="4">
        <text>(24S)-24,25-epoxycucurbitadienol + H2O = (24R)-24,25-dihydroxycucurbitadienol</text>
        <dbReference type="Rhea" id="RHEA:81855"/>
        <dbReference type="ChEBI" id="CHEBI:15377"/>
        <dbReference type="ChEBI" id="CHEBI:229949"/>
        <dbReference type="ChEBI" id="CHEBI:229950"/>
    </reaction>
    <physiologicalReaction direction="left-to-right" evidence="4">
        <dbReference type="Rhea" id="RHEA:81856"/>
    </physiologicalReaction>
</comment>
<comment type="pathway">
    <text evidence="4">Secondary metabolite biosynthesis; terpenoid biosynthesis.</text>
</comment>
<comment type="subunit">
    <text evidence="2">Homodimer.</text>
</comment>
<comment type="tissue specificity">
    <text evidence="4">Highly expressed in fruits 15 days after anthesis (15-DAA).</text>
</comment>
<comment type="miscellaneous">
    <text evidence="7">Mogrosides, the major active constituents of S.grosvenorii fruits, are a mixture of cucurbitane-type triterpenoid glycosides that have been proven to be powerful and zero-caloric sweeteners and can hence be used as a sucrose substitute for diabetic and obese patients.</text>
</comment>
<comment type="similarity">
    <text evidence="6">Belongs to the AB hydrolase superfamily. Epoxide hydrolase family.</text>
</comment>
<evidence type="ECO:0000250" key="1">
    <source>
        <dbReference type="UniProtKB" id="P34913"/>
    </source>
</evidence>
<evidence type="ECO:0000250" key="2">
    <source>
        <dbReference type="UniProtKB" id="P95276"/>
    </source>
</evidence>
<evidence type="ECO:0000255" key="3"/>
<evidence type="ECO:0000269" key="4">
    <source>
    </source>
</evidence>
<evidence type="ECO:0000303" key="5">
    <source>
    </source>
</evidence>
<evidence type="ECO:0000305" key="6"/>
<evidence type="ECO:0000305" key="7">
    <source>
    </source>
</evidence>